<keyword id="KW-0687">Ribonucleoprotein</keyword>
<keyword id="KW-0689">Ribosomal protein</keyword>
<evidence type="ECO:0000255" key="1">
    <source>
        <dbReference type="HAMAP-Rule" id="MF_00358"/>
    </source>
</evidence>
<evidence type="ECO:0000305" key="2"/>
<gene>
    <name evidence="1" type="primary">rpsU2</name>
    <name type="ordered locus">RL4130</name>
</gene>
<feature type="chain" id="PRO_0000266747" description="Small ribosomal subunit protein bS21B">
    <location>
        <begin position="1"/>
        <end position="71"/>
    </location>
</feature>
<accession>Q1MBR4</accession>
<dbReference type="EMBL" id="AM236080">
    <property type="protein sequence ID" value="CAK09619.1"/>
    <property type="status" value="ALT_INIT"/>
    <property type="molecule type" value="Genomic_DNA"/>
</dbReference>
<dbReference type="SMR" id="Q1MBR4"/>
<dbReference type="EnsemblBacteria" id="CAK09619">
    <property type="protein sequence ID" value="CAK09619"/>
    <property type="gene ID" value="RL4130"/>
</dbReference>
<dbReference type="KEGG" id="rle:RL4130"/>
<dbReference type="eggNOG" id="COG0828">
    <property type="taxonomic scope" value="Bacteria"/>
</dbReference>
<dbReference type="HOGENOM" id="CLU_159258_0_1_5"/>
<dbReference type="Proteomes" id="UP000006575">
    <property type="component" value="Chromosome"/>
</dbReference>
<dbReference type="GO" id="GO:1990904">
    <property type="term" value="C:ribonucleoprotein complex"/>
    <property type="evidence" value="ECO:0007669"/>
    <property type="project" value="UniProtKB-KW"/>
</dbReference>
<dbReference type="GO" id="GO:0005840">
    <property type="term" value="C:ribosome"/>
    <property type="evidence" value="ECO:0007669"/>
    <property type="project" value="UniProtKB-KW"/>
</dbReference>
<dbReference type="GO" id="GO:0003735">
    <property type="term" value="F:structural constituent of ribosome"/>
    <property type="evidence" value="ECO:0007669"/>
    <property type="project" value="InterPro"/>
</dbReference>
<dbReference type="GO" id="GO:0006412">
    <property type="term" value="P:translation"/>
    <property type="evidence" value="ECO:0007669"/>
    <property type="project" value="UniProtKB-UniRule"/>
</dbReference>
<dbReference type="Gene3D" id="1.20.5.1150">
    <property type="entry name" value="Ribosomal protein S8"/>
    <property type="match status" value="1"/>
</dbReference>
<dbReference type="HAMAP" id="MF_00358">
    <property type="entry name" value="Ribosomal_bS21"/>
    <property type="match status" value="1"/>
</dbReference>
<dbReference type="InterPro" id="IPR001911">
    <property type="entry name" value="Ribosomal_bS21"/>
</dbReference>
<dbReference type="InterPro" id="IPR018278">
    <property type="entry name" value="Ribosomal_bS21_CS"/>
</dbReference>
<dbReference type="InterPro" id="IPR038380">
    <property type="entry name" value="Ribosomal_bS21_sf"/>
</dbReference>
<dbReference type="NCBIfam" id="TIGR00030">
    <property type="entry name" value="S21p"/>
    <property type="match status" value="1"/>
</dbReference>
<dbReference type="PANTHER" id="PTHR21109">
    <property type="entry name" value="MITOCHONDRIAL 28S RIBOSOMAL PROTEIN S21"/>
    <property type="match status" value="1"/>
</dbReference>
<dbReference type="PANTHER" id="PTHR21109:SF0">
    <property type="entry name" value="SMALL RIBOSOMAL SUBUNIT PROTEIN BS21M"/>
    <property type="match status" value="1"/>
</dbReference>
<dbReference type="Pfam" id="PF01165">
    <property type="entry name" value="Ribosomal_S21"/>
    <property type="match status" value="1"/>
</dbReference>
<dbReference type="PRINTS" id="PR00976">
    <property type="entry name" value="RIBOSOMALS21"/>
</dbReference>
<dbReference type="PROSITE" id="PS01181">
    <property type="entry name" value="RIBOSOMAL_S21"/>
    <property type="match status" value="1"/>
</dbReference>
<name>RS212_RHIJ3</name>
<proteinExistence type="inferred from homology"/>
<reference key="1">
    <citation type="journal article" date="2006" name="Genome Biol.">
        <title>The genome of Rhizobium leguminosarum has recognizable core and accessory components.</title>
        <authorList>
            <person name="Young J.P.W."/>
            <person name="Crossman L.C."/>
            <person name="Johnston A.W.B."/>
            <person name="Thomson N.R."/>
            <person name="Ghazoui Z.F."/>
            <person name="Hull K.H."/>
            <person name="Wexler M."/>
            <person name="Curson A.R.J."/>
            <person name="Todd J.D."/>
            <person name="Poole P.S."/>
            <person name="Mauchline T.H."/>
            <person name="East A.K."/>
            <person name="Quail M.A."/>
            <person name="Churcher C."/>
            <person name="Arrowsmith C."/>
            <person name="Cherevach I."/>
            <person name="Chillingworth T."/>
            <person name="Clarke K."/>
            <person name="Cronin A."/>
            <person name="Davis P."/>
            <person name="Fraser A."/>
            <person name="Hance Z."/>
            <person name="Hauser H."/>
            <person name="Jagels K."/>
            <person name="Moule S."/>
            <person name="Mungall K."/>
            <person name="Norbertczak H."/>
            <person name="Rabbinowitsch E."/>
            <person name="Sanders M."/>
            <person name="Simmonds M."/>
            <person name="Whitehead S."/>
            <person name="Parkhill J."/>
        </authorList>
    </citation>
    <scope>NUCLEOTIDE SEQUENCE [LARGE SCALE GENOMIC DNA]</scope>
    <source>
        <strain>DSM 114642 / LMG 32736 / 3841</strain>
    </source>
</reference>
<protein>
    <recommendedName>
        <fullName evidence="1">Small ribosomal subunit protein bS21B</fullName>
    </recommendedName>
    <alternativeName>
        <fullName evidence="2">30S ribosomal protein S21 2</fullName>
    </alternativeName>
</protein>
<organism>
    <name type="scientific">Rhizobium johnstonii (strain DSM 114642 / LMG 32736 / 3841)</name>
    <name type="common">Rhizobium leguminosarum bv. viciae</name>
    <dbReference type="NCBI Taxonomy" id="216596"/>
    <lineage>
        <taxon>Bacteria</taxon>
        <taxon>Pseudomonadati</taxon>
        <taxon>Pseudomonadota</taxon>
        <taxon>Alphaproteobacteria</taxon>
        <taxon>Hyphomicrobiales</taxon>
        <taxon>Rhizobiaceae</taxon>
        <taxon>Rhizobium/Agrobacterium group</taxon>
        <taxon>Rhizobium</taxon>
        <taxon>Rhizobium johnstonii</taxon>
    </lineage>
</organism>
<comment type="similarity">
    <text evidence="1">Belongs to the bacterial ribosomal protein bS21 family.</text>
</comment>
<comment type="sequence caution" evidence="2">
    <conflict type="erroneous initiation">
        <sequence resource="EMBL-CDS" id="CAK09619"/>
    </conflict>
    <text>Extended N-terminus.</text>
</comment>
<sequence>MQVLVRDNNVDQALRALKKKMQREGIFREMKMRDYYEKPSQKRAREKAEAVRRVRKLARKRAQREGLVAAR</sequence>